<protein>
    <recommendedName>
        <fullName evidence="1">NADPH-dependent 7-cyano-7-deazaguanine reductase</fullName>
        <ecNumber evidence="1">1.7.1.13</ecNumber>
    </recommendedName>
    <alternativeName>
        <fullName evidence="1">7-cyano-7-carbaguanine reductase</fullName>
    </alternativeName>
    <alternativeName>
        <fullName evidence="1">NADPH-dependent nitrile oxidoreductase</fullName>
    </alternativeName>
    <alternativeName>
        <fullName evidence="1">PreQ(0) reductase</fullName>
    </alternativeName>
</protein>
<reference key="1">
    <citation type="journal article" date="2005" name="Nucleic Acids Res.">
        <title>Genome dynamics and diversity of Shigella species, the etiologic agents of bacillary dysentery.</title>
        <authorList>
            <person name="Yang F."/>
            <person name="Yang J."/>
            <person name="Zhang X."/>
            <person name="Chen L."/>
            <person name="Jiang Y."/>
            <person name="Yan Y."/>
            <person name="Tang X."/>
            <person name="Wang J."/>
            <person name="Xiong Z."/>
            <person name="Dong J."/>
            <person name="Xue Y."/>
            <person name="Zhu Y."/>
            <person name="Xu X."/>
            <person name="Sun L."/>
            <person name="Chen S."/>
            <person name="Nie H."/>
            <person name="Peng J."/>
            <person name="Xu J."/>
            <person name="Wang Y."/>
            <person name="Yuan Z."/>
            <person name="Wen Y."/>
            <person name="Yao Z."/>
            <person name="Shen Y."/>
            <person name="Qiang B."/>
            <person name="Hou Y."/>
            <person name="Yu J."/>
            <person name="Jin Q."/>
        </authorList>
    </citation>
    <scope>NUCLEOTIDE SEQUENCE [LARGE SCALE GENOMIC DNA]</scope>
    <source>
        <strain>Ss046</strain>
    </source>
</reference>
<dbReference type="EC" id="1.7.1.13" evidence="1"/>
<dbReference type="EMBL" id="CP000038">
    <property type="protein sequence ID" value="AAZ89550.1"/>
    <property type="molecule type" value="Genomic_DNA"/>
</dbReference>
<dbReference type="RefSeq" id="WP_000100420.1">
    <property type="nucleotide sequence ID" value="NC_007384.1"/>
</dbReference>
<dbReference type="SMR" id="Q3YY62"/>
<dbReference type="GeneID" id="93779204"/>
<dbReference type="KEGG" id="ssn:SSON_2951"/>
<dbReference type="HOGENOM" id="CLU_054738_0_0_6"/>
<dbReference type="UniPathway" id="UPA00392"/>
<dbReference type="Proteomes" id="UP000002529">
    <property type="component" value="Chromosome"/>
</dbReference>
<dbReference type="GO" id="GO:0005737">
    <property type="term" value="C:cytoplasm"/>
    <property type="evidence" value="ECO:0007669"/>
    <property type="project" value="UniProtKB-SubCell"/>
</dbReference>
<dbReference type="GO" id="GO:0033739">
    <property type="term" value="F:preQ1 synthase activity"/>
    <property type="evidence" value="ECO:0007669"/>
    <property type="project" value="UniProtKB-UniRule"/>
</dbReference>
<dbReference type="GO" id="GO:0008616">
    <property type="term" value="P:queuosine biosynthetic process"/>
    <property type="evidence" value="ECO:0007669"/>
    <property type="project" value="UniProtKB-UniRule"/>
</dbReference>
<dbReference type="GO" id="GO:0006400">
    <property type="term" value="P:tRNA modification"/>
    <property type="evidence" value="ECO:0007669"/>
    <property type="project" value="UniProtKB-UniRule"/>
</dbReference>
<dbReference type="FunFam" id="3.30.1130.10:FF:000004">
    <property type="entry name" value="NADPH-dependent 7-cyano-7-deazaguanine reductase"/>
    <property type="match status" value="1"/>
</dbReference>
<dbReference type="FunFam" id="3.30.1130.10:FF:000006">
    <property type="entry name" value="NADPH-dependent 7-cyano-7-deazaguanine reductase"/>
    <property type="match status" value="1"/>
</dbReference>
<dbReference type="Gene3D" id="3.30.1130.10">
    <property type="match status" value="2"/>
</dbReference>
<dbReference type="HAMAP" id="MF_00817">
    <property type="entry name" value="QueF_type2"/>
    <property type="match status" value="1"/>
</dbReference>
<dbReference type="InterPro" id="IPR043133">
    <property type="entry name" value="GTP-CH-I_C/QueF"/>
</dbReference>
<dbReference type="InterPro" id="IPR050084">
    <property type="entry name" value="NADPH_dep_7-cyano-7-deazaG_red"/>
</dbReference>
<dbReference type="InterPro" id="IPR029500">
    <property type="entry name" value="QueF"/>
</dbReference>
<dbReference type="InterPro" id="IPR029139">
    <property type="entry name" value="QueF_N"/>
</dbReference>
<dbReference type="InterPro" id="IPR016428">
    <property type="entry name" value="QueF_type2"/>
</dbReference>
<dbReference type="NCBIfam" id="TIGR03138">
    <property type="entry name" value="QueF"/>
    <property type="match status" value="1"/>
</dbReference>
<dbReference type="PANTHER" id="PTHR34354">
    <property type="entry name" value="NADPH-DEPENDENT 7-CYANO-7-DEAZAGUANINE REDUCTASE"/>
    <property type="match status" value="1"/>
</dbReference>
<dbReference type="PANTHER" id="PTHR34354:SF1">
    <property type="entry name" value="NADPH-DEPENDENT 7-CYANO-7-DEAZAGUANINE REDUCTASE"/>
    <property type="match status" value="1"/>
</dbReference>
<dbReference type="Pfam" id="PF14489">
    <property type="entry name" value="QueF"/>
    <property type="match status" value="1"/>
</dbReference>
<dbReference type="Pfam" id="PF14819">
    <property type="entry name" value="QueF_N"/>
    <property type="match status" value="1"/>
</dbReference>
<dbReference type="PIRSF" id="PIRSF004750">
    <property type="entry name" value="Nitrile_oxidored_YqcD_prd"/>
    <property type="match status" value="1"/>
</dbReference>
<dbReference type="SUPFAM" id="SSF55620">
    <property type="entry name" value="Tetrahydrobiopterin biosynthesis enzymes-like"/>
    <property type="match status" value="1"/>
</dbReference>
<gene>
    <name evidence="1" type="primary">queF</name>
    <name type="ordered locus">SSON_2951</name>
</gene>
<sequence>MSSYANHQALAGLTLGKSTDYRDTYDASLLQGVPRSLNRDPLGLKADNLPFHGTDIWTLYELSWLNAKGLPQVAVGHVELDYTSVNLIESKSFKLYLNSFNQTRFNNWDEVRQTLERDLSTCAQGKISVALYRLDELEGQPIGHFNGTCIDDQDITIDNYEFTTDYLENATCGEKVVEETLVSHLLKSNCLITHQPDWGSIQIQYRGRQIDREKLLRYLVSFRHHNEFHEQCVERIFNDLLRFCQPEKLSVYARYTRRGGLDINPWRSNSDFVPSTTRLVRQ</sequence>
<name>QUEF_SHISS</name>
<evidence type="ECO:0000255" key="1">
    <source>
        <dbReference type="HAMAP-Rule" id="MF_00817"/>
    </source>
</evidence>
<comment type="function">
    <text evidence="1">Catalyzes the NADPH-dependent reduction of 7-cyano-7-deazaguanine (preQ0) to 7-aminomethyl-7-deazaguanine (preQ1).</text>
</comment>
<comment type="catalytic activity">
    <reaction evidence="1">
        <text>7-aminomethyl-7-carbaguanine + 2 NADP(+) = 7-cyano-7-deazaguanine + 2 NADPH + 3 H(+)</text>
        <dbReference type="Rhea" id="RHEA:13409"/>
        <dbReference type="ChEBI" id="CHEBI:15378"/>
        <dbReference type="ChEBI" id="CHEBI:45075"/>
        <dbReference type="ChEBI" id="CHEBI:57783"/>
        <dbReference type="ChEBI" id="CHEBI:58349"/>
        <dbReference type="ChEBI" id="CHEBI:58703"/>
        <dbReference type="EC" id="1.7.1.13"/>
    </reaction>
</comment>
<comment type="pathway">
    <text evidence="1">tRNA modification; tRNA-queuosine biosynthesis.</text>
</comment>
<comment type="subunit">
    <text evidence="1">Homodimer.</text>
</comment>
<comment type="subcellular location">
    <subcellularLocation>
        <location evidence="1">Cytoplasm</location>
    </subcellularLocation>
</comment>
<comment type="similarity">
    <text evidence="1">Belongs to the GTP cyclohydrolase I family. QueF type 2 subfamily.</text>
</comment>
<feature type="chain" id="PRO_0000247721" description="NADPH-dependent 7-cyano-7-deazaguanine reductase">
    <location>
        <begin position="1"/>
        <end position="282"/>
    </location>
</feature>
<feature type="active site" description="Thioimide intermediate" evidence="1">
    <location>
        <position position="190"/>
    </location>
</feature>
<feature type="active site" description="Proton donor" evidence="1">
    <location>
        <position position="197"/>
    </location>
</feature>
<feature type="binding site" evidence="1">
    <location>
        <begin position="88"/>
        <end position="90"/>
    </location>
    <ligand>
        <name>substrate</name>
    </ligand>
</feature>
<feature type="binding site" evidence="1">
    <location>
        <begin position="90"/>
        <end position="91"/>
    </location>
    <ligand>
        <name>NADPH</name>
        <dbReference type="ChEBI" id="CHEBI:57783"/>
    </ligand>
</feature>
<feature type="binding site" evidence="1">
    <location>
        <begin position="229"/>
        <end position="230"/>
    </location>
    <ligand>
        <name>substrate</name>
    </ligand>
</feature>
<feature type="binding site" evidence="1">
    <location>
        <begin position="258"/>
        <end position="259"/>
    </location>
    <ligand>
        <name>NADPH</name>
        <dbReference type="ChEBI" id="CHEBI:57783"/>
    </ligand>
</feature>
<accession>Q3YY62</accession>
<proteinExistence type="inferred from homology"/>
<keyword id="KW-0963">Cytoplasm</keyword>
<keyword id="KW-0521">NADP</keyword>
<keyword id="KW-0560">Oxidoreductase</keyword>
<keyword id="KW-0671">Queuosine biosynthesis</keyword>
<keyword id="KW-1185">Reference proteome</keyword>
<organism>
    <name type="scientific">Shigella sonnei (strain Ss046)</name>
    <dbReference type="NCBI Taxonomy" id="300269"/>
    <lineage>
        <taxon>Bacteria</taxon>
        <taxon>Pseudomonadati</taxon>
        <taxon>Pseudomonadota</taxon>
        <taxon>Gammaproteobacteria</taxon>
        <taxon>Enterobacterales</taxon>
        <taxon>Enterobacteriaceae</taxon>
        <taxon>Shigella</taxon>
    </lineage>
</organism>